<accession>Q5KWC8</accession>
<sequence>MRCPSCHHSGTRVLESRPVEEGRSIRRRRECEQCHYRFTTFERIEEPPLIVVKKEGTREEFSREKILRGLIKACEKRPVALEELEKVTQEIERELRNQGVSEVKSETIGEMVMERLSHIDEVAYVRFASVYRQFKDINVFIEELKELIKKGQR</sequence>
<name>NRDR_GEOKA</name>
<evidence type="ECO:0000255" key="1">
    <source>
        <dbReference type="HAMAP-Rule" id="MF_00440"/>
    </source>
</evidence>
<evidence type="ECO:0000305" key="2"/>
<proteinExistence type="inferred from homology"/>
<gene>
    <name evidence="1" type="primary">nrdR</name>
    <name type="ordered locus">GK2723</name>
</gene>
<protein>
    <recommendedName>
        <fullName evidence="1">Transcriptional repressor NrdR</fullName>
    </recommendedName>
</protein>
<organism>
    <name type="scientific">Geobacillus kaustophilus (strain HTA426)</name>
    <dbReference type="NCBI Taxonomy" id="235909"/>
    <lineage>
        <taxon>Bacteria</taxon>
        <taxon>Bacillati</taxon>
        <taxon>Bacillota</taxon>
        <taxon>Bacilli</taxon>
        <taxon>Bacillales</taxon>
        <taxon>Anoxybacillaceae</taxon>
        <taxon>Geobacillus</taxon>
        <taxon>Geobacillus thermoleovorans group</taxon>
    </lineage>
</organism>
<keyword id="KW-0067">ATP-binding</keyword>
<keyword id="KW-0238">DNA-binding</keyword>
<keyword id="KW-0479">Metal-binding</keyword>
<keyword id="KW-0547">Nucleotide-binding</keyword>
<keyword id="KW-1185">Reference proteome</keyword>
<keyword id="KW-0678">Repressor</keyword>
<keyword id="KW-0804">Transcription</keyword>
<keyword id="KW-0805">Transcription regulation</keyword>
<keyword id="KW-0862">Zinc</keyword>
<keyword id="KW-0863">Zinc-finger</keyword>
<dbReference type="EMBL" id="BA000043">
    <property type="protein sequence ID" value="BAD77008.1"/>
    <property type="status" value="ALT_FRAME"/>
    <property type="molecule type" value="Genomic_DNA"/>
</dbReference>
<dbReference type="SMR" id="Q5KWC8"/>
<dbReference type="STRING" id="235909.GK2723"/>
<dbReference type="KEGG" id="gka:GK2723"/>
<dbReference type="eggNOG" id="COG1327">
    <property type="taxonomic scope" value="Bacteria"/>
</dbReference>
<dbReference type="HOGENOM" id="CLU_108412_0_0_9"/>
<dbReference type="Proteomes" id="UP000001172">
    <property type="component" value="Chromosome"/>
</dbReference>
<dbReference type="GO" id="GO:0005524">
    <property type="term" value="F:ATP binding"/>
    <property type="evidence" value="ECO:0007669"/>
    <property type="project" value="UniProtKB-KW"/>
</dbReference>
<dbReference type="GO" id="GO:0003677">
    <property type="term" value="F:DNA binding"/>
    <property type="evidence" value="ECO:0007669"/>
    <property type="project" value="UniProtKB-KW"/>
</dbReference>
<dbReference type="GO" id="GO:0008270">
    <property type="term" value="F:zinc ion binding"/>
    <property type="evidence" value="ECO:0007669"/>
    <property type="project" value="UniProtKB-UniRule"/>
</dbReference>
<dbReference type="GO" id="GO:0045892">
    <property type="term" value="P:negative regulation of DNA-templated transcription"/>
    <property type="evidence" value="ECO:0007669"/>
    <property type="project" value="UniProtKB-UniRule"/>
</dbReference>
<dbReference type="HAMAP" id="MF_00440">
    <property type="entry name" value="NrdR"/>
    <property type="match status" value="1"/>
</dbReference>
<dbReference type="InterPro" id="IPR005144">
    <property type="entry name" value="ATP-cone_dom"/>
</dbReference>
<dbReference type="InterPro" id="IPR055173">
    <property type="entry name" value="NrdR-like_N"/>
</dbReference>
<dbReference type="InterPro" id="IPR003796">
    <property type="entry name" value="RNR_NrdR-like"/>
</dbReference>
<dbReference type="NCBIfam" id="TIGR00244">
    <property type="entry name" value="transcriptional regulator NrdR"/>
    <property type="match status" value="1"/>
</dbReference>
<dbReference type="PANTHER" id="PTHR30455">
    <property type="entry name" value="TRANSCRIPTIONAL REPRESSOR NRDR"/>
    <property type="match status" value="1"/>
</dbReference>
<dbReference type="PANTHER" id="PTHR30455:SF2">
    <property type="entry name" value="TRANSCRIPTIONAL REPRESSOR NRDR"/>
    <property type="match status" value="1"/>
</dbReference>
<dbReference type="Pfam" id="PF03477">
    <property type="entry name" value="ATP-cone"/>
    <property type="match status" value="1"/>
</dbReference>
<dbReference type="Pfam" id="PF22811">
    <property type="entry name" value="Zn_ribbon_NrdR"/>
    <property type="match status" value="1"/>
</dbReference>
<dbReference type="PROSITE" id="PS51161">
    <property type="entry name" value="ATP_CONE"/>
    <property type="match status" value="1"/>
</dbReference>
<reference key="1">
    <citation type="journal article" date="2004" name="Nucleic Acids Res.">
        <title>Thermoadaptation trait revealed by the genome sequence of thermophilic Geobacillus kaustophilus.</title>
        <authorList>
            <person name="Takami H."/>
            <person name="Takaki Y."/>
            <person name="Chee G.-J."/>
            <person name="Nishi S."/>
            <person name="Shimamura S."/>
            <person name="Suzuki H."/>
            <person name="Matsui S."/>
            <person name="Uchiyama I."/>
        </authorList>
    </citation>
    <scope>NUCLEOTIDE SEQUENCE [LARGE SCALE GENOMIC DNA]</scope>
    <source>
        <strain>HTA426</strain>
    </source>
</reference>
<comment type="function">
    <text evidence="1">Negatively regulates transcription of bacterial ribonucleotide reductase nrd genes and operons by binding to NrdR-boxes.</text>
</comment>
<comment type="cofactor">
    <cofactor evidence="1">
        <name>Zn(2+)</name>
        <dbReference type="ChEBI" id="CHEBI:29105"/>
    </cofactor>
    <text evidence="1">Binds 1 zinc ion.</text>
</comment>
<comment type="similarity">
    <text evidence="1">Belongs to the NrdR family.</text>
</comment>
<comment type="sequence caution" evidence="2">
    <conflict type="frameshift">
        <sequence resource="EMBL-CDS" id="BAD77008"/>
    </conflict>
</comment>
<feature type="chain" id="PRO_0000182300" description="Transcriptional repressor NrdR">
    <location>
        <begin position="1"/>
        <end position="153"/>
    </location>
</feature>
<feature type="domain" description="ATP-cone" evidence="1">
    <location>
        <begin position="49"/>
        <end position="139"/>
    </location>
</feature>
<feature type="zinc finger region" evidence="1">
    <location>
        <begin position="3"/>
        <end position="34"/>
    </location>
</feature>